<sequence>MTNPPGQSVSANTVAESHEGEFGCTLMDLRKLMELRGADAVAQISAHYGGVQEICTRLKTSPIEGLSGNPADLEKRRLVFGKNVIPPKRPKTFLELVWEALQDVTLIILEIAAIISLVLSFYRPPGGDNEICGHIASSPEEEEEGETGWIEGAAILASVIIVVLVTAFNDWSKEKQFRGLQSRIELEQKFSIIRNGQLIQLPVAEIVVGDIAQIKYGDLLPADGILIQGNDLKIDESSLTGESDHVKKTLDKDPMLLSGTHVMEGSGRMVVTAVGVNSQTGIIFTLLGASEEEDDDDKKKKGKKQGAPENRNKAKTQDGVALEIQPLNSQEGLDSEDKEKKIARIPKKEKSVLQGKLTRLAVQIGKAGLIMSVLTVVILILYFVVDNFVIQRREWLPECTPVYIQYFVKFFIIGVTVLVVAVPEGLPLAVTISLAYSVKKMMKDNNLVRHLDACETMGNATAICSDKTGTLTMNRMTVVQAYIGGTHYRQIPQPDVFPPKVLELIVNGISINCAYTSKIQPPEKEGGLPRQVGNKTECGLLGFVTDLKQDYQAVRNEVPEEKLFKVYTFNSVRKSMSTVIRKPEGGFRMFSKGASEIMLRRCDRILNKEGEIKSFRSKDRDNMVRNVIEPMASEGLRTICLAYRDFDGTEPSWDIEGEILTSLICIAVVGIEDPVRPEVPDAIAKCKRAGITVRMVTGDNVNTARAIATKCGILTPKDDFLCLEGKEFNSLIRNEKGEVEQEKLDKIWPKLRVLARSSPTDKHTLVKGIIDSTAGEQRQVVAVTGDGTNDGPALKKADVGFAMGIAGTDVAKEASDIILTDDNFTSIVKAVMWGRNVYDSISKFLQFQLTVNVVAVIVAFTGACITQDSPLKAVQMLWVNLIMDTFASLALATEPPTESLLRRRPYGRNKPLISRTMMKNILGHAVYQLLIVFLLVFAGDTLFDIDSGRKAPLNSPPSQHYTIVFNTFVLMQLFNEINARKIHGEKNVFAGVYRNIIFCTVVLGTFFCQIMIVELGGKPFSCTSLTMEQWMWCLFIGIGELLWGQVISAIPTKSLKFLKEAGHGSDKEDISRDTEGMDEIDLAEMELRRGQILWVRGLNRIQTQIRVVKLFHNNHEVAHKPKNRSSIHTFMTQPEYPADDELSQSFLDIQEGNPELVSKAGTSVLLLDGEAASHDNINNNAVDCHQVQIVASHSDSPLPSLETPV</sequence>
<keyword id="KW-0025">Alternative splicing</keyword>
<keyword id="KW-0067">ATP-binding</keyword>
<keyword id="KW-0106">Calcium</keyword>
<keyword id="KW-0109">Calcium transport</keyword>
<keyword id="KW-0112">Calmodulin-binding</keyword>
<keyword id="KW-1003">Cell membrane</keyword>
<keyword id="KW-0966">Cell projection</keyword>
<keyword id="KW-0969">Cilium</keyword>
<keyword id="KW-0282">Flagellum</keyword>
<keyword id="KW-0406">Ion transport</keyword>
<keyword id="KW-0460">Magnesium</keyword>
<keyword id="KW-0472">Membrane</keyword>
<keyword id="KW-0479">Metal-binding</keyword>
<keyword id="KW-0488">Methylation</keyword>
<keyword id="KW-0547">Nucleotide-binding</keyword>
<keyword id="KW-0597">Phosphoprotein</keyword>
<keyword id="KW-1185">Reference proteome</keyword>
<keyword id="KW-1278">Translocase</keyword>
<keyword id="KW-0812">Transmembrane</keyword>
<keyword id="KW-1133">Transmembrane helix</keyword>
<keyword id="KW-0813">Transport</keyword>
<name>AT2B4_MOUSE</name>
<feature type="chain" id="PRO_0000435124" description="Plasma membrane calcium-transporting ATPase 4">
    <location>
        <begin position="1"/>
        <end position="1205"/>
    </location>
</feature>
<feature type="topological domain" description="Cytoplasmic" evidence="10">
    <location>
        <begin position="1"/>
        <end position="100"/>
    </location>
</feature>
<feature type="transmembrane region" description="Helical" evidence="6">
    <location>
        <begin position="101"/>
        <end position="121"/>
    </location>
</feature>
<feature type="topological domain" description="Extracellular" evidence="10">
    <location>
        <begin position="122"/>
        <end position="147"/>
    </location>
</feature>
<feature type="transmembrane region" description="Helical" evidence="6">
    <location>
        <begin position="148"/>
        <end position="168"/>
    </location>
</feature>
<feature type="topological domain" description="Cytoplasmic" evidence="10">
    <location>
        <begin position="169"/>
        <end position="369"/>
    </location>
</feature>
<feature type="transmembrane region" description="Helical" evidence="6">
    <location>
        <begin position="370"/>
        <end position="390"/>
    </location>
</feature>
<feature type="topological domain" description="Extracellular" evidence="10">
    <location>
        <begin position="391"/>
        <end position="409"/>
    </location>
</feature>
<feature type="transmembrane region" description="Helical" evidence="6">
    <location>
        <begin position="410"/>
        <end position="430"/>
    </location>
</feature>
<feature type="topological domain" description="Cytoplasmic" evidence="10">
    <location>
        <begin position="431"/>
        <end position="844"/>
    </location>
</feature>
<feature type="transmembrane region" description="Helical" evidence="6">
    <location>
        <begin position="845"/>
        <end position="865"/>
    </location>
</feature>
<feature type="topological domain" description="Extracellular" evidence="10">
    <location>
        <begin position="866"/>
        <end position="872"/>
    </location>
</feature>
<feature type="transmembrane region" description="Helical" evidence="6">
    <location>
        <begin position="873"/>
        <end position="893"/>
    </location>
</feature>
<feature type="topological domain" description="Cytoplasmic" evidence="10">
    <location>
        <begin position="894"/>
        <end position="919"/>
    </location>
</feature>
<feature type="transmembrane region" description="Helical" evidence="6">
    <location>
        <begin position="920"/>
        <end position="942"/>
    </location>
</feature>
<feature type="topological domain" description="Extracellular" evidence="10">
    <location>
        <begin position="943"/>
        <end position="956"/>
    </location>
</feature>
<feature type="transmembrane region" description="Helical" evidence="6">
    <location>
        <begin position="957"/>
        <end position="979"/>
    </location>
</feature>
<feature type="topological domain" description="Cytoplasmic" evidence="10">
    <location>
        <begin position="980"/>
        <end position="995"/>
    </location>
</feature>
<feature type="transmembrane region" description="Helical" evidence="6">
    <location>
        <begin position="996"/>
        <end position="1016"/>
    </location>
</feature>
<feature type="topological domain" description="Extracellular" evidence="10">
    <location>
        <begin position="1017"/>
        <end position="1029"/>
    </location>
</feature>
<feature type="transmembrane region" description="Helical" evidence="6">
    <location>
        <begin position="1030"/>
        <end position="1050"/>
    </location>
</feature>
<feature type="topological domain" description="Cytoplasmic" evidence="10">
    <location>
        <begin position="1051"/>
        <end position="1205"/>
    </location>
</feature>
<feature type="region of interest" description="Disordered" evidence="7">
    <location>
        <begin position="294"/>
        <end position="318"/>
    </location>
</feature>
<feature type="region of interest" description="Calmodulin-binding subdomain A" evidence="3 4">
    <location>
        <begin position="1087"/>
        <end position="1104"/>
    </location>
</feature>
<feature type="region of interest" description="Calmodulin-binding subdomain B" evidence="3">
    <location>
        <begin position="1105"/>
        <end position="1114"/>
    </location>
</feature>
<feature type="active site" description="4-aspartylphosphate intermediate" evidence="2">
    <location>
        <position position="466"/>
    </location>
</feature>
<feature type="binding site" evidence="1">
    <location>
        <position position="786"/>
    </location>
    <ligand>
        <name>Mg(2+)</name>
        <dbReference type="ChEBI" id="CHEBI:18420"/>
    </ligand>
</feature>
<feature type="binding site" evidence="1">
    <location>
        <position position="790"/>
    </location>
    <ligand>
        <name>Mg(2+)</name>
        <dbReference type="ChEBI" id="CHEBI:18420"/>
    </ligand>
</feature>
<feature type="modified residue" description="Phosphoserine" evidence="12">
    <location>
        <position position="329"/>
    </location>
</feature>
<feature type="modified residue" description="Phosphoserine" evidence="5">
    <location>
        <position position="335"/>
    </location>
</feature>
<feature type="modified residue" description="Phosphoserine" evidence="5">
    <location>
        <position position="1065"/>
    </location>
</feature>
<feature type="modified residue" description="Phosphoserine" evidence="5">
    <location>
        <position position="1071"/>
    </location>
</feature>
<feature type="modified residue" description="Omega-N-methylarginine" evidence="14">
    <location>
        <position position="1072"/>
    </location>
</feature>
<feature type="modified residue" description="Phosphothreonine; by PKC" evidence="1">
    <location>
        <position position="1103"/>
    </location>
</feature>
<feature type="modified residue" description="Phosphoserine" evidence="13">
    <location>
        <position position="1145"/>
    </location>
</feature>
<feature type="splice variant" id="VSP_058018" description="In isoform 2.">
    <original>QIRV</original>
    <variation>QEGN</variation>
    <location>
        <begin position="1104"/>
        <end position="1107"/>
    </location>
</feature>
<feature type="splice variant" id="VSP_058019" description="In isoform 2.">
    <location>
        <begin position="1108"/>
        <end position="1205"/>
    </location>
</feature>
<accession>Q6Q477</accession>
<accession>Q32ME1</accession>
<organism>
    <name type="scientific">Mus musculus</name>
    <name type="common">Mouse</name>
    <dbReference type="NCBI Taxonomy" id="10090"/>
    <lineage>
        <taxon>Eukaryota</taxon>
        <taxon>Metazoa</taxon>
        <taxon>Chordata</taxon>
        <taxon>Craniata</taxon>
        <taxon>Vertebrata</taxon>
        <taxon>Euteleostomi</taxon>
        <taxon>Mammalia</taxon>
        <taxon>Eutheria</taxon>
        <taxon>Euarchontoglires</taxon>
        <taxon>Glires</taxon>
        <taxon>Rodentia</taxon>
        <taxon>Myomorpha</taxon>
        <taxon>Muroidea</taxon>
        <taxon>Muridae</taxon>
        <taxon>Murinae</taxon>
        <taxon>Mus</taxon>
        <taxon>Mus</taxon>
    </lineage>
</organism>
<proteinExistence type="evidence at protein level"/>
<protein>
    <recommendedName>
        <fullName evidence="10">Plasma membrane calcium-transporting ATPase 4</fullName>
        <shortName evidence="9">PMCA4</shortName>
        <ecNumber evidence="4">7.2.2.10</ecNumber>
    </recommendedName>
</protein>
<reference key="1">
    <citation type="journal article" date="2004" name="J. Biol. Chem.">
        <title>Plasma membrane Ca2+ ATPase 4 is required for sperm motility and male fertility.</title>
        <authorList>
            <person name="Schuh K."/>
            <person name="Cartwright E.J."/>
            <person name="Jankevics E."/>
            <person name="Bundschu K."/>
            <person name="Liebermann J."/>
            <person name="Williams J.C."/>
            <person name="Armesilla A.L."/>
            <person name="Emerson M."/>
            <person name="Oceandy D."/>
            <person name="Knobeloch K.P."/>
            <person name="Neyses L."/>
        </authorList>
    </citation>
    <scope>NUCLEOTIDE SEQUENCE [MRNA] (ISOFORM 1)</scope>
    <scope>FUNCTION</scope>
    <scope>DISRUPTION PHENOTYPE</scope>
    <scope>SUBCELLULAR LOCATION</scope>
    <scope>TISSUE SPECIFICITY</scope>
    <source>
        <strain>BALB/cJ</strain>
    </source>
</reference>
<reference key="2">
    <citation type="journal article" date="2009" name="PLoS Biol.">
        <title>Lineage-specific biology revealed by a finished genome assembly of the mouse.</title>
        <authorList>
            <person name="Church D.M."/>
            <person name="Goodstadt L."/>
            <person name="Hillier L.W."/>
            <person name="Zody M.C."/>
            <person name="Goldstein S."/>
            <person name="She X."/>
            <person name="Bult C.J."/>
            <person name="Agarwala R."/>
            <person name="Cherry J.L."/>
            <person name="DiCuccio M."/>
            <person name="Hlavina W."/>
            <person name="Kapustin Y."/>
            <person name="Meric P."/>
            <person name="Maglott D."/>
            <person name="Birtle Z."/>
            <person name="Marques A.C."/>
            <person name="Graves T."/>
            <person name="Zhou S."/>
            <person name="Teague B."/>
            <person name="Potamousis K."/>
            <person name="Churas C."/>
            <person name="Place M."/>
            <person name="Herschleb J."/>
            <person name="Runnheim R."/>
            <person name="Forrest D."/>
            <person name="Amos-Landgraf J."/>
            <person name="Schwartz D.C."/>
            <person name="Cheng Z."/>
            <person name="Lindblad-Toh K."/>
            <person name="Eichler E.E."/>
            <person name="Ponting C.P."/>
        </authorList>
    </citation>
    <scope>NUCLEOTIDE SEQUENCE [LARGE SCALE GENOMIC DNA]</scope>
    <source>
        <strain>C57BL/6J</strain>
    </source>
</reference>
<reference key="3">
    <citation type="journal article" date="2004" name="Genome Res.">
        <title>The status, quality, and expansion of the NIH full-length cDNA project: the Mammalian Gene Collection (MGC).</title>
        <authorList>
            <consortium name="The MGC Project Team"/>
        </authorList>
    </citation>
    <scope>NUCLEOTIDE SEQUENCE [LARGE SCALE MRNA] (ISOFORM 2)</scope>
</reference>
<reference key="4">
    <citation type="journal article" date="2009" name="Immunity">
        <title>The phagosomal proteome in interferon-gamma-activated macrophages.</title>
        <authorList>
            <person name="Trost M."/>
            <person name="English L."/>
            <person name="Lemieux S."/>
            <person name="Courcelles M."/>
            <person name="Desjardins M."/>
            <person name="Thibault P."/>
        </authorList>
    </citation>
    <scope>PHOSPHORYLATION [LARGE SCALE ANALYSIS] AT SER-329</scope>
    <scope>IDENTIFICATION BY MASS SPECTROMETRY [LARGE SCALE ANALYSIS]</scope>
</reference>
<reference key="5">
    <citation type="journal article" date="2010" name="Cell">
        <title>A tissue-specific atlas of mouse protein phosphorylation and expression.</title>
        <authorList>
            <person name="Huttlin E.L."/>
            <person name="Jedrychowski M.P."/>
            <person name="Elias J.E."/>
            <person name="Goswami T."/>
            <person name="Rad R."/>
            <person name="Beausoleil S.A."/>
            <person name="Villen J."/>
            <person name="Haas W."/>
            <person name="Sowa M.E."/>
            <person name="Gygi S.P."/>
        </authorList>
    </citation>
    <scope>PHOSPHORYLATION [LARGE SCALE ANALYSIS] AT SER-1145</scope>
    <scope>IDENTIFICATION BY MASS SPECTROMETRY [LARGE SCALE ANALYSIS]</scope>
    <source>
        <tissue>Brain</tissue>
        <tissue>Brown adipose tissue</tissue>
        <tissue>Heart</tissue>
        <tissue>Kidney</tissue>
        <tissue>Lung</tissue>
        <tissue>Spleen</tissue>
        <tissue>Testis</tissue>
    </source>
</reference>
<reference key="6">
    <citation type="journal article" date="2014" name="Mol. Cell. Proteomics">
        <title>Immunoaffinity enrichment and mass spectrometry analysis of protein methylation.</title>
        <authorList>
            <person name="Guo A."/>
            <person name="Gu H."/>
            <person name="Zhou J."/>
            <person name="Mulhern D."/>
            <person name="Wang Y."/>
            <person name="Lee K.A."/>
            <person name="Yang V."/>
            <person name="Aguiar M."/>
            <person name="Kornhauser J."/>
            <person name="Jia X."/>
            <person name="Ren J."/>
            <person name="Beausoleil S.A."/>
            <person name="Silva J.C."/>
            <person name="Vemulapalli V."/>
            <person name="Bedford M.T."/>
            <person name="Comb M.J."/>
        </authorList>
    </citation>
    <scope>METHYLATION [LARGE SCALE ANALYSIS] AT ARG-1072</scope>
    <scope>IDENTIFICATION BY MASS SPECTROMETRY [LARGE SCALE ANALYSIS]</scope>
    <source>
        <tissue>Embryo</tissue>
    </source>
</reference>
<evidence type="ECO:0000250" key="1"/>
<evidence type="ECO:0000250" key="2">
    <source>
        <dbReference type="UniProtKB" id="P19156"/>
    </source>
</evidence>
<evidence type="ECO:0000250" key="3">
    <source>
        <dbReference type="UniProtKB" id="P20020"/>
    </source>
</evidence>
<evidence type="ECO:0000250" key="4">
    <source>
        <dbReference type="UniProtKB" id="P23634"/>
    </source>
</evidence>
<evidence type="ECO:0000250" key="5">
    <source>
        <dbReference type="UniProtKB" id="Q64542"/>
    </source>
</evidence>
<evidence type="ECO:0000255" key="6"/>
<evidence type="ECO:0000256" key="7">
    <source>
        <dbReference type="SAM" id="MobiDB-lite"/>
    </source>
</evidence>
<evidence type="ECO:0000269" key="8">
    <source>
    </source>
</evidence>
<evidence type="ECO:0000303" key="9">
    <source>
    </source>
</evidence>
<evidence type="ECO:0000305" key="10"/>
<evidence type="ECO:0000312" key="11">
    <source>
        <dbReference type="MGI" id="MGI:88111"/>
    </source>
</evidence>
<evidence type="ECO:0007744" key="12">
    <source>
    </source>
</evidence>
<evidence type="ECO:0007744" key="13">
    <source>
    </source>
</evidence>
<evidence type="ECO:0007744" key="14">
    <source>
    </source>
</evidence>
<dbReference type="EC" id="7.2.2.10" evidence="4"/>
<dbReference type="EMBL" id="AY560895">
    <property type="protein sequence ID" value="AAT01506.1"/>
    <property type="molecule type" value="mRNA"/>
</dbReference>
<dbReference type="EMBL" id="AC124338">
    <property type="status" value="NOT_ANNOTATED_CDS"/>
    <property type="molecule type" value="Genomic_DNA"/>
</dbReference>
<dbReference type="EMBL" id="AC157924">
    <property type="status" value="NOT_ANNOTATED_CDS"/>
    <property type="molecule type" value="Genomic_DNA"/>
</dbReference>
<dbReference type="EMBL" id="BC109172">
    <property type="protein sequence ID" value="AAI09173.1"/>
    <property type="molecule type" value="mRNA"/>
</dbReference>
<dbReference type="EMBL" id="BC109173">
    <property type="protein sequence ID" value="AAI09174.1"/>
    <property type="molecule type" value="mRNA"/>
</dbReference>
<dbReference type="CCDS" id="CCDS15298.1">
    <molecule id="Q6Q477-1"/>
</dbReference>
<dbReference type="RefSeq" id="NP_001161421.1">
    <property type="nucleotide sequence ID" value="NM_001167949.2"/>
</dbReference>
<dbReference type="RefSeq" id="NP_998781.1">
    <molecule id="Q6Q477-1"/>
    <property type="nucleotide sequence ID" value="NM_213616.5"/>
</dbReference>
<dbReference type="RefSeq" id="XP_006529786.1">
    <property type="nucleotide sequence ID" value="XM_006529723.2"/>
</dbReference>
<dbReference type="RefSeq" id="XP_006529787.1">
    <property type="nucleotide sequence ID" value="XM_006529724.3"/>
</dbReference>
<dbReference type="RefSeq" id="XP_006529788.1">
    <property type="nucleotide sequence ID" value="XM_006529725.2"/>
</dbReference>
<dbReference type="SMR" id="Q6Q477"/>
<dbReference type="CORUM" id="Q6Q477"/>
<dbReference type="DIP" id="DIP-46143N"/>
<dbReference type="FunCoup" id="Q6Q477">
    <property type="interactions" value="1128"/>
</dbReference>
<dbReference type="IntAct" id="Q6Q477">
    <property type="interactions" value="5"/>
</dbReference>
<dbReference type="MINT" id="Q6Q477"/>
<dbReference type="STRING" id="10090.ENSMUSP00000119242"/>
<dbReference type="GlyGen" id="Q6Q477">
    <property type="glycosylation" value="4 sites, 3 N-linked glycans (3 sites), 1 O-linked glycan (1 site)"/>
</dbReference>
<dbReference type="iPTMnet" id="Q6Q477"/>
<dbReference type="PhosphoSitePlus" id="Q6Q477"/>
<dbReference type="SwissPalm" id="Q6Q477"/>
<dbReference type="jPOST" id="Q6Q477"/>
<dbReference type="PaxDb" id="10090-ENSMUSP00000119242"/>
<dbReference type="ProteomicsDB" id="277123">
    <molecule id="Q6Q477-1"/>
</dbReference>
<dbReference type="ProteomicsDB" id="277124">
    <molecule id="Q6Q477-2"/>
</dbReference>
<dbReference type="Pumba" id="Q6Q477"/>
<dbReference type="Antibodypedia" id="4241">
    <property type="antibodies" value="154 antibodies from 23 providers"/>
</dbReference>
<dbReference type="DNASU" id="381290"/>
<dbReference type="Ensembl" id="ENSMUST00000112264.2">
    <molecule id="Q6Q477-2"/>
    <property type="protein sequence ID" value="ENSMUSP00000107883.2"/>
    <property type="gene ID" value="ENSMUSG00000026463.18"/>
</dbReference>
<dbReference type="Ensembl" id="ENSMUST00000143567.8">
    <molecule id="Q6Q477-1"/>
    <property type="protein sequence ID" value="ENSMUSP00000119242.2"/>
    <property type="gene ID" value="ENSMUSG00000026463.18"/>
</dbReference>
<dbReference type="Ensembl" id="ENSMUST00000165602.9">
    <molecule id="Q6Q477-1"/>
    <property type="protein sequence ID" value="ENSMUSP00000133187.3"/>
    <property type="gene ID" value="ENSMUSG00000026463.18"/>
</dbReference>
<dbReference type="GeneID" id="381290"/>
<dbReference type="KEGG" id="mmu:381290"/>
<dbReference type="UCSC" id="uc007cqv.3">
    <molecule id="Q6Q477-1"/>
    <property type="organism name" value="mouse"/>
</dbReference>
<dbReference type="UCSC" id="uc007cqw.1">
    <property type="organism name" value="mouse"/>
</dbReference>
<dbReference type="AGR" id="MGI:88111"/>
<dbReference type="CTD" id="493"/>
<dbReference type="MGI" id="MGI:88111">
    <property type="gene designation" value="Atp2b4"/>
</dbReference>
<dbReference type="VEuPathDB" id="HostDB:ENSMUSG00000026463"/>
<dbReference type="eggNOG" id="KOG0204">
    <property type="taxonomic scope" value="Eukaryota"/>
</dbReference>
<dbReference type="GeneTree" id="ENSGT00940000154527"/>
<dbReference type="InParanoid" id="Q6Q477"/>
<dbReference type="OMA" id="MINVHDI"/>
<dbReference type="OrthoDB" id="116380at2759"/>
<dbReference type="PhylomeDB" id="Q6Q477"/>
<dbReference type="TreeFam" id="TF300330"/>
<dbReference type="BRENDA" id="7.2.2.10">
    <property type="organism ID" value="3474"/>
</dbReference>
<dbReference type="Reactome" id="R-MMU-418359">
    <property type="pathway name" value="Reduction of cytosolic Ca++ levels"/>
</dbReference>
<dbReference type="Reactome" id="R-MMU-5578775">
    <property type="pathway name" value="Ion homeostasis"/>
</dbReference>
<dbReference type="Reactome" id="R-MMU-936837">
    <property type="pathway name" value="Ion transport by P-type ATPases"/>
</dbReference>
<dbReference type="BioGRID-ORCS" id="381290">
    <property type="hits" value="4 hits in 77 CRISPR screens"/>
</dbReference>
<dbReference type="CD-CODE" id="CE726F99">
    <property type="entry name" value="Postsynaptic density"/>
</dbReference>
<dbReference type="ChiTaRS" id="Atp2b4">
    <property type="organism name" value="mouse"/>
</dbReference>
<dbReference type="PRO" id="PR:Q6Q477"/>
<dbReference type="Proteomes" id="UP000000589">
    <property type="component" value="Chromosome 1"/>
</dbReference>
<dbReference type="RNAct" id="Q6Q477">
    <property type="molecule type" value="protein"/>
</dbReference>
<dbReference type="Bgee" id="ENSMUSG00000026463">
    <property type="expression patterns" value="Expressed in spermatocyte and 140 other cell types or tissues"/>
</dbReference>
<dbReference type="ExpressionAtlas" id="Q6Q477">
    <property type="expression patterns" value="baseline and differential"/>
</dbReference>
<dbReference type="GO" id="GO:0016323">
    <property type="term" value="C:basolateral plasma membrane"/>
    <property type="evidence" value="ECO:0007669"/>
    <property type="project" value="Ensembl"/>
</dbReference>
<dbReference type="GO" id="GO:0036064">
    <property type="term" value="C:ciliary basal body"/>
    <property type="evidence" value="ECO:0007669"/>
    <property type="project" value="Ensembl"/>
</dbReference>
<dbReference type="GO" id="GO:0098978">
    <property type="term" value="C:glutamatergic synapse"/>
    <property type="evidence" value="ECO:0007669"/>
    <property type="project" value="Ensembl"/>
</dbReference>
<dbReference type="GO" id="GO:0045121">
    <property type="term" value="C:membrane raft"/>
    <property type="evidence" value="ECO:0007669"/>
    <property type="project" value="Ensembl"/>
</dbReference>
<dbReference type="GO" id="GO:0005739">
    <property type="term" value="C:mitochondrion"/>
    <property type="evidence" value="ECO:0007669"/>
    <property type="project" value="Ensembl"/>
</dbReference>
<dbReference type="GO" id="GO:0005886">
    <property type="term" value="C:plasma membrane"/>
    <property type="evidence" value="ECO:0000304"/>
    <property type="project" value="MGI"/>
</dbReference>
<dbReference type="GO" id="GO:0048787">
    <property type="term" value="C:presynaptic active zone membrane"/>
    <property type="evidence" value="ECO:0007669"/>
    <property type="project" value="Ensembl"/>
</dbReference>
<dbReference type="GO" id="GO:0042383">
    <property type="term" value="C:sarcolemma"/>
    <property type="evidence" value="ECO:0000314"/>
    <property type="project" value="BHF-UCL"/>
</dbReference>
<dbReference type="GO" id="GO:0036126">
    <property type="term" value="C:sperm flagellum"/>
    <property type="evidence" value="ECO:0000314"/>
    <property type="project" value="UniProtKB"/>
</dbReference>
<dbReference type="GO" id="GO:0097228">
    <property type="term" value="C:sperm principal piece"/>
    <property type="evidence" value="ECO:0007669"/>
    <property type="project" value="Ensembl"/>
</dbReference>
<dbReference type="GO" id="GO:0030315">
    <property type="term" value="C:T-tubule"/>
    <property type="evidence" value="ECO:0000314"/>
    <property type="project" value="BHF-UCL"/>
</dbReference>
<dbReference type="GO" id="GO:0030018">
    <property type="term" value="C:Z disc"/>
    <property type="evidence" value="ECO:0007669"/>
    <property type="project" value="Ensembl"/>
</dbReference>
<dbReference type="GO" id="GO:0005524">
    <property type="term" value="F:ATP binding"/>
    <property type="evidence" value="ECO:0007669"/>
    <property type="project" value="UniProtKB-KW"/>
</dbReference>
<dbReference type="GO" id="GO:0016887">
    <property type="term" value="F:ATP hydrolysis activity"/>
    <property type="evidence" value="ECO:0007669"/>
    <property type="project" value="InterPro"/>
</dbReference>
<dbReference type="GO" id="GO:0005516">
    <property type="term" value="F:calmodulin binding"/>
    <property type="evidence" value="ECO:0007669"/>
    <property type="project" value="UniProtKB-KW"/>
</dbReference>
<dbReference type="GO" id="GO:0046872">
    <property type="term" value="F:metal ion binding"/>
    <property type="evidence" value="ECO:0007669"/>
    <property type="project" value="UniProtKB-KW"/>
</dbReference>
<dbReference type="GO" id="GO:0050998">
    <property type="term" value="F:nitric-oxide synthase binding"/>
    <property type="evidence" value="ECO:0007669"/>
    <property type="project" value="Ensembl"/>
</dbReference>
<dbReference type="GO" id="GO:0036487">
    <property type="term" value="F:nitric-oxide synthase inhibitor activity"/>
    <property type="evidence" value="ECO:0007669"/>
    <property type="project" value="Ensembl"/>
</dbReference>
<dbReference type="GO" id="GO:0005388">
    <property type="term" value="F:P-type calcium transporter activity"/>
    <property type="evidence" value="ECO:0007669"/>
    <property type="project" value="UniProtKB-EC"/>
</dbReference>
<dbReference type="GO" id="GO:0030165">
    <property type="term" value="F:PDZ domain binding"/>
    <property type="evidence" value="ECO:0007669"/>
    <property type="project" value="Ensembl"/>
</dbReference>
<dbReference type="GO" id="GO:0019901">
    <property type="term" value="F:protein kinase binding"/>
    <property type="evidence" value="ECO:0007669"/>
    <property type="project" value="Ensembl"/>
</dbReference>
<dbReference type="GO" id="GO:0030346">
    <property type="term" value="F:protein phosphatase 2B binding"/>
    <property type="evidence" value="ECO:0007669"/>
    <property type="project" value="Ensembl"/>
</dbReference>
<dbReference type="GO" id="GO:1901660">
    <property type="term" value="P:calcium ion export"/>
    <property type="evidence" value="ECO:0007669"/>
    <property type="project" value="Ensembl"/>
</dbReference>
<dbReference type="GO" id="GO:0006816">
    <property type="term" value="P:calcium ion transport"/>
    <property type="evidence" value="ECO:0000304"/>
    <property type="project" value="MGI"/>
</dbReference>
<dbReference type="GO" id="GO:1905145">
    <property type="term" value="P:cellular response to acetylcholine"/>
    <property type="evidence" value="ECO:0000315"/>
    <property type="project" value="UniProtKB"/>
</dbReference>
<dbReference type="GO" id="GO:0071872">
    <property type="term" value="P:cellular response to epinephrine stimulus"/>
    <property type="evidence" value="ECO:0007669"/>
    <property type="project" value="Ensembl"/>
</dbReference>
<dbReference type="GO" id="GO:0030317">
    <property type="term" value="P:flagellated sperm motility"/>
    <property type="evidence" value="ECO:0000315"/>
    <property type="project" value="UniProtKB"/>
</dbReference>
<dbReference type="GO" id="GO:0021766">
    <property type="term" value="P:hippocampus development"/>
    <property type="evidence" value="ECO:0007669"/>
    <property type="project" value="Ensembl"/>
</dbReference>
<dbReference type="GO" id="GO:0006874">
    <property type="term" value="P:intracellular calcium ion homeostasis"/>
    <property type="evidence" value="ECO:0000315"/>
    <property type="project" value="UniProtKB"/>
</dbReference>
<dbReference type="GO" id="GO:0071878">
    <property type="term" value="P:negative regulation of adenylate cyclase-activating adrenergic receptor signaling pathway"/>
    <property type="evidence" value="ECO:0007669"/>
    <property type="project" value="Ensembl"/>
</dbReference>
<dbReference type="GO" id="GO:0016525">
    <property type="term" value="P:negative regulation of angiogenesis"/>
    <property type="evidence" value="ECO:0000315"/>
    <property type="project" value="ARUK-UCL"/>
</dbReference>
<dbReference type="GO" id="GO:1900082">
    <property type="term" value="P:negative regulation of arginine catabolic process"/>
    <property type="evidence" value="ECO:0007669"/>
    <property type="project" value="Ensembl"/>
</dbReference>
<dbReference type="GO" id="GO:0043537">
    <property type="term" value="P:negative regulation of blood vessel endothelial cell migration"/>
    <property type="evidence" value="ECO:0000315"/>
    <property type="project" value="ARUK-UCL"/>
</dbReference>
<dbReference type="GO" id="GO:0070885">
    <property type="term" value="P:negative regulation of calcineurin-NFAT signaling cascade"/>
    <property type="evidence" value="ECO:0000315"/>
    <property type="project" value="ARUK-UCL"/>
</dbReference>
<dbReference type="GO" id="GO:1903243">
    <property type="term" value="P:negative regulation of cardiac muscle hypertrophy in response to stress"/>
    <property type="evidence" value="ECO:0000315"/>
    <property type="project" value="BHF-UCL"/>
</dbReference>
<dbReference type="GO" id="GO:1902548">
    <property type="term" value="P:negative regulation of cellular response to vascular endothelial growth factor stimulus"/>
    <property type="evidence" value="ECO:0007669"/>
    <property type="project" value="Ensembl"/>
</dbReference>
<dbReference type="GO" id="GO:1903249">
    <property type="term" value="P:negative regulation of citrulline biosynthetic process"/>
    <property type="evidence" value="ECO:0007669"/>
    <property type="project" value="Ensembl"/>
</dbReference>
<dbReference type="GO" id="GO:0010629">
    <property type="term" value="P:negative regulation of gene expression"/>
    <property type="evidence" value="ECO:0000315"/>
    <property type="project" value="ARUK-UCL"/>
</dbReference>
<dbReference type="GO" id="GO:0045019">
    <property type="term" value="P:negative regulation of nitric oxide biosynthetic process"/>
    <property type="evidence" value="ECO:0007669"/>
    <property type="project" value="Ensembl"/>
</dbReference>
<dbReference type="GO" id="GO:0098736">
    <property type="term" value="P:negative regulation of the force of heart contraction"/>
    <property type="evidence" value="ECO:0007669"/>
    <property type="project" value="Ensembl"/>
</dbReference>
<dbReference type="GO" id="GO:0003407">
    <property type="term" value="P:neural retina development"/>
    <property type="evidence" value="ECO:0007669"/>
    <property type="project" value="Ensembl"/>
</dbReference>
<dbReference type="GO" id="GO:0038060">
    <property type="term" value="P:nitric oxide-cGMP-mediated signaling"/>
    <property type="evidence" value="ECO:0007669"/>
    <property type="project" value="Ensembl"/>
</dbReference>
<dbReference type="GO" id="GO:1903078">
    <property type="term" value="P:positive regulation of protein localization to plasma membrane"/>
    <property type="evidence" value="ECO:0007669"/>
    <property type="project" value="Ensembl"/>
</dbReference>
<dbReference type="GO" id="GO:1902806">
    <property type="term" value="P:regulation of cell cycle G1/S phase transition"/>
    <property type="evidence" value="ECO:0007669"/>
    <property type="project" value="Ensembl"/>
</dbReference>
<dbReference type="GO" id="GO:0006357">
    <property type="term" value="P:regulation of transcription by RNA polymerase II"/>
    <property type="evidence" value="ECO:0007669"/>
    <property type="project" value="Ensembl"/>
</dbReference>
<dbReference type="GO" id="GO:0051599">
    <property type="term" value="P:response to hydrostatic pressure"/>
    <property type="evidence" value="ECO:0007669"/>
    <property type="project" value="Ensembl"/>
</dbReference>
<dbReference type="GO" id="GO:0007283">
    <property type="term" value="P:spermatogenesis"/>
    <property type="evidence" value="ECO:0007669"/>
    <property type="project" value="Ensembl"/>
</dbReference>
<dbReference type="GO" id="GO:0014832">
    <property type="term" value="P:urinary bladder smooth muscle contraction"/>
    <property type="evidence" value="ECO:0000315"/>
    <property type="project" value="UniProtKB"/>
</dbReference>
<dbReference type="CDD" id="cd02081">
    <property type="entry name" value="P-type_ATPase_Ca_PMCA-like"/>
    <property type="match status" value="1"/>
</dbReference>
<dbReference type="FunFam" id="1.20.1110.10:FF:000001">
    <property type="entry name" value="Calcium-transporting ATPase"/>
    <property type="match status" value="1"/>
</dbReference>
<dbReference type="FunFam" id="1.20.1110.10:FF:000002">
    <property type="entry name" value="Calcium-transporting ATPase"/>
    <property type="match status" value="1"/>
</dbReference>
<dbReference type="FunFam" id="1.20.1110.10:FF:000008">
    <property type="entry name" value="Calcium-transporting ATPase"/>
    <property type="match status" value="1"/>
</dbReference>
<dbReference type="FunFam" id="2.70.150.10:FF:000001">
    <property type="entry name" value="Calcium-transporting ATPase"/>
    <property type="match status" value="1"/>
</dbReference>
<dbReference type="FunFam" id="3.40.1110.10:FF:000022">
    <property type="entry name" value="Calcium-transporting ATPase"/>
    <property type="match status" value="1"/>
</dbReference>
<dbReference type="FunFam" id="3.40.50.1000:FF:000007">
    <property type="entry name" value="Calcium-transporting ATPase"/>
    <property type="match status" value="1"/>
</dbReference>
<dbReference type="Gene3D" id="3.40.1110.10">
    <property type="entry name" value="Calcium-transporting ATPase, cytoplasmic domain N"/>
    <property type="match status" value="1"/>
</dbReference>
<dbReference type="Gene3D" id="2.70.150.10">
    <property type="entry name" value="Calcium-transporting ATPase, cytoplasmic transduction domain A"/>
    <property type="match status" value="1"/>
</dbReference>
<dbReference type="Gene3D" id="1.20.1110.10">
    <property type="entry name" value="Calcium-transporting ATPase, transmembrane domain"/>
    <property type="match status" value="3"/>
</dbReference>
<dbReference type="Gene3D" id="3.40.50.1000">
    <property type="entry name" value="HAD superfamily/HAD-like"/>
    <property type="match status" value="1"/>
</dbReference>
<dbReference type="InterPro" id="IPR022141">
    <property type="entry name" value="ATP_Ca_trans_C"/>
</dbReference>
<dbReference type="InterPro" id="IPR006068">
    <property type="entry name" value="ATPase_P-typ_cation-transptr_C"/>
</dbReference>
<dbReference type="InterPro" id="IPR004014">
    <property type="entry name" value="ATPase_P-typ_cation-transptr_N"/>
</dbReference>
<dbReference type="InterPro" id="IPR023299">
    <property type="entry name" value="ATPase_P-typ_cyto_dom_N"/>
</dbReference>
<dbReference type="InterPro" id="IPR018303">
    <property type="entry name" value="ATPase_P-typ_P_site"/>
</dbReference>
<dbReference type="InterPro" id="IPR023298">
    <property type="entry name" value="ATPase_P-typ_TM_dom_sf"/>
</dbReference>
<dbReference type="InterPro" id="IPR008250">
    <property type="entry name" value="ATPase_P-typ_transduc_dom_A_sf"/>
</dbReference>
<dbReference type="InterPro" id="IPR036412">
    <property type="entry name" value="HAD-like_sf"/>
</dbReference>
<dbReference type="InterPro" id="IPR023214">
    <property type="entry name" value="HAD_sf"/>
</dbReference>
<dbReference type="InterPro" id="IPR006408">
    <property type="entry name" value="P-type_ATPase_IIB"/>
</dbReference>
<dbReference type="InterPro" id="IPR001757">
    <property type="entry name" value="P_typ_ATPase"/>
</dbReference>
<dbReference type="InterPro" id="IPR044492">
    <property type="entry name" value="P_typ_ATPase_HD_dom"/>
</dbReference>
<dbReference type="NCBIfam" id="TIGR01517">
    <property type="entry name" value="ATPase-IIB_Ca"/>
    <property type="match status" value="1"/>
</dbReference>
<dbReference type="NCBIfam" id="TIGR01494">
    <property type="entry name" value="ATPase_P-type"/>
    <property type="match status" value="3"/>
</dbReference>
<dbReference type="PANTHER" id="PTHR24093">
    <property type="entry name" value="CATION TRANSPORTING ATPASE"/>
    <property type="match status" value="1"/>
</dbReference>
<dbReference type="PANTHER" id="PTHR24093:SF435">
    <property type="entry name" value="PLASMA MEMBRANE CALCIUM-TRANSPORTING ATPASE 4"/>
    <property type="match status" value="1"/>
</dbReference>
<dbReference type="Pfam" id="PF12424">
    <property type="entry name" value="ATP_Ca_trans_C"/>
    <property type="match status" value="1"/>
</dbReference>
<dbReference type="Pfam" id="PF13246">
    <property type="entry name" value="Cation_ATPase"/>
    <property type="match status" value="1"/>
</dbReference>
<dbReference type="Pfam" id="PF00689">
    <property type="entry name" value="Cation_ATPase_C"/>
    <property type="match status" value="1"/>
</dbReference>
<dbReference type="Pfam" id="PF00690">
    <property type="entry name" value="Cation_ATPase_N"/>
    <property type="match status" value="1"/>
</dbReference>
<dbReference type="Pfam" id="PF00122">
    <property type="entry name" value="E1-E2_ATPase"/>
    <property type="match status" value="2"/>
</dbReference>
<dbReference type="Pfam" id="PF00702">
    <property type="entry name" value="Hydrolase"/>
    <property type="match status" value="1"/>
</dbReference>
<dbReference type="PRINTS" id="PR00119">
    <property type="entry name" value="CATATPASE"/>
</dbReference>
<dbReference type="PRINTS" id="PR00121">
    <property type="entry name" value="NAKATPASE"/>
</dbReference>
<dbReference type="SFLD" id="SFLDS00003">
    <property type="entry name" value="Haloacid_Dehalogenase"/>
    <property type="match status" value="1"/>
</dbReference>
<dbReference type="SFLD" id="SFLDF00027">
    <property type="entry name" value="p-type_atpase"/>
    <property type="match status" value="1"/>
</dbReference>
<dbReference type="SMART" id="SM00831">
    <property type="entry name" value="Cation_ATPase_N"/>
    <property type="match status" value="1"/>
</dbReference>
<dbReference type="SUPFAM" id="SSF81653">
    <property type="entry name" value="Calcium ATPase, transduction domain A"/>
    <property type="match status" value="1"/>
</dbReference>
<dbReference type="SUPFAM" id="SSF81665">
    <property type="entry name" value="Calcium ATPase, transmembrane domain M"/>
    <property type="match status" value="1"/>
</dbReference>
<dbReference type="SUPFAM" id="SSF56784">
    <property type="entry name" value="HAD-like"/>
    <property type="match status" value="1"/>
</dbReference>
<dbReference type="SUPFAM" id="SSF81660">
    <property type="entry name" value="Metal cation-transporting ATPase, ATP-binding domain N"/>
    <property type="match status" value="1"/>
</dbReference>
<dbReference type="PROSITE" id="PS00154">
    <property type="entry name" value="ATPASE_E1_E2"/>
    <property type="match status" value="1"/>
</dbReference>
<comment type="function">
    <text evidence="4 8">Calcium/calmodulin-regulated and magnesium-dependent enzyme that catalyzes the hydrolysis of ATP coupled with the transport of calcium out of the cell (By similarity). By regulating sperm cell calcium homeostasis, may play a role in sperm motility (PubMed:15078889).</text>
</comment>
<comment type="catalytic activity">
    <reaction evidence="4">
        <text>Ca(2+)(in) + ATP + H2O = Ca(2+)(out) + ADP + phosphate + H(+)</text>
        <dbReference type="Rhea" id="RHEA:18105"/>
        <dbReference type="ChEBI" id="CHEBI:15377"/>
        <dbReference type="ChEBI" id="CHEBI:15378"/>
        <dbReference type="ChEBI" id="CHEBI:29108"/>
        <dbReference type="ChEBI" id="CHEBI:30616"/>
        <dbReference type="ChEBI" id="CHEBI:43474"/>
        <dbReference type="ChEBI" id="CHEBI:456216"/>
        <dbReference type="EC" id="7.2.2.10"/>
    </reaction>
</comment>
<comment type="activity regulation">
    <text evidence="4">Activated by calcium/calmodulin.</text>
</comment>
<comment type="subunit">
    <text evidence="4">Interacts with PDZD11. Interacts with SLC35G1 and STIM1. Interacts with calmodulin.</text>
</comment>
<comment type="subcellular location">
    <subcellularLocation>
        <location evidence="4">Membrane</location>
        <topology evidence="6">Multi-pass membrane protein</topology>
    </subcellularLocation>
    <subcellularLocation>
        <location evidence="8">Cell projection</location>
        <location evidence="8">Cilium</location>
        <location evidence="8">Flagellum membrane</location>
        <topology evidence="6">Multi-pass membrane protein</topology>
    </subcellularLocation>
</comment>
<comment type="alternative products">
    <event type="alternative splicing"/>
    <isoform>
        <id>Q6Q477-1</id>
        <name>1</name>
        <name>PMCA4b</name>
        <sequence type="displayed"/>
    </isoform>
    <isoform>
        <id>Q6Q477-2</id>
        <name>2</name>
        <sequence type="described" ref="VSP_058018 VSP_058019"/>
    </isoform>
</comment>
<comment type="tissue specificity">
    <text evidence="8">Specifically expressed by sperm in testis (at protein level).</text>
</comment>
<comment type="disruption phenotype">
    <text evidence="8">Male mice lacking Atp2b4 are infertile with severe reduction of sperm motility.</text>
</comment>
<comment type="similarity">
    <text evidence="10">Belongs to the cation transport ATPase (P-type) (TC 3.A.3) family. Type IIB subfamily.</text>
</comment>
<gene>
    <name evidence="11" type="primary">Atp2b4</name>
</gene>